<feature type="chain" id="PRO_1000144678" description="Large ribosomal subunit protein uL30">
    <location>
        <begin position="1"/>
        <end position="59"/>
    </location>
</feature>
<evidence type="ECO:0000255" key="1">
    <source>
        <dbReference type="HAMAP-Rule" id="MF_01371"/>
    </source>
</evidence>
<evidence type="ECO:0000305" key="2"/>
<protein>
    <recommendedName>
        <fullName evidence="1">Large ribosomal subunit protein uL30</fullName>
    </recommendedName>
    <alternativeName>
        <fullName evidence="2">50S ribosomal protein L30</fullName>
    </alternativeName>
</protein>
<comment type="subunit">
    <text evidence="1">Part of the 50S ribosomal subunit.</text>
</comment>
<comment type="similarity">
    <text evidence="1">Belongs to the universal ribosomal protein uL30 family.</text>
</comment>
<gene>
    <name evidence="1" type="primary">rpmD</name>
    <name type="ordered locus">ECIAI1_3451</name>
</gene>
<sequence>MAKTIKITQTRSAIGRLPKHKATLLGLGLRRIGHTVEREDTPAIRGMINAVSFMVKVEE</sequence>
<keyword id="KW-0687">Ribonucleoprotein</keyword>
<keyword id="KW-0689">Ribosomal protein</keyword>
<organism>
    <name type="scientific">Escherichia coli O8 (strain IAI1)</name>
    <dbReference type="NCBI Taxonomy" id="585034"/>
    <lineage>
        <taxon>Bacteria</taxon>
        <taxon>Pseudomonadati</taxon>
        <taxon>Pseudomonadota</taxon>
        <taxon>Gammaproteobacteria</taxon>
        <taxon>Enterobacterales</taxon>
        <taxon>Enterobacteriaceae</taxon>
        <taxon>Escherichia</taxon>
    </lineage>
</organism>
<dbReference type="EMBL" id="CU928160">
    <property type="protein sequence ID" value="CAR00253.1"/>
    <property type="molecule type" value="Genomic_DNA"/>
</dbReference>
<dbReference type="RefSeq" id="WP_001140433.1">
    <property type="nucleotide sequence ID" value="NC_011741.1"/>
</dbReference>
<dbReference type="SMR" id="B7M107"/>
<dbReference type="GeneID" id="93778685"/>
<dbReference type="KEGG" id="ecr:ECIAI1_3451"/>
<dbReference type="HOGENOM" id="CLU_131047_1_4_6"/>
<dbReference type="GO" id="GO:0022625">
    <property type="term" value="C:cytosolic large ribosomal subunit"/>
    <property type="evidence" value="ECO:0007669"/>
    <property type="project" value="TreeGrafter"/>
</dbReference>
<dbReference type="GO" id="GO:0003735">
    <property type="term" value="F:structural constituent of ribosome"/>
    <property type="evidence" value="ECO:0007669"/>
    <property type="project" value="InterPro"/>
</dbReference>
<dbReference type="GO" id="GO:0006412">
    <property type="term" value="P:translation"/>
    <property type="evidence" value="ECO:0007669"/>
    <property type="project" value="UniProtKB-UniRule"/>
</dbReference>
<dbReference type="CDD" id="cd01658">
    <property type="entry name" value="Ribosomal_L30"/>
    <property type="match status" value="1"/>
</dbReference>
<dbReference type="FunFam" id="3.30.1390.20:FF:000001">
    <property type="entry name" value="50S ribosomal protein L30"/>
    <property type="match status" value="1"/>
</dbReference>
<dbReference type="Gene3D" id="3.30.1390.20">
    <property type="entry name" value="Ribosomal protein L30, ferredoxin-like fold domain"/>
    <property type="match status" value="1"/>
</dbReference>
<dbReference type="HAMAP" id="MF_01371_B">
    <property type="entry name" value="Ribosomal_uL30_B"/>
    <property type="match status" value="1"/>
</dbReference>
<dbReference type="InterPro" id="IPR036919">
    <property type="entry name" value="Ribo_uL30_ferredoxin-like_sf"/>
</dbReference>
<dbReference type="InterPro" id="IPR005996">
    <property type="entry name" value="Ribosomal_uL30_bac-type"/>
</dbReference>
<dbReference type="InterPro" id="IPR018038">
    <property type="entry name" value="Ribosomal_uL30_CS"/>
</dbReference>
<dbReference type="InterPro" id="IPR016082">
    <property type="entry name" value="Ribosomal_uL30_ferredoxin-like"/>
</dbReference>
<dbReference type="NCBIfam" id="TIGR01308">
    <property type="entry name" value="rpmD_bact"/>
    <property type="match status" value="1"/>
</dbReference>
<dbReference type="PANTHER" id="PTHR15892:SF2">
    <property type="entry name" value="LARGE RIBOSOMAL SUBUNIT PROTEIN UL30M"/>
    <property type="match status" value="1"/>
</dbReference>
<dbReference type="PANTHER" id="PTHR15892">
    <property type="entry name" value="MITOCHONDRIAL RIBOSOMAL PROTEIN L30"/>
    <property type="match status" value="1"/>
</dbReference>
<dbReference type="Pfam" id="PF00327">
    <property type="entry name" value="Ribosomal_L30"/>
    <property type="match status" value="1"/>
</dbReference>
<dbReference type="PIRSF" id="PIRSF002211">
    <property type="entry name" value="Ribosomal_L30_bac-type"/>
    <property type="match status" value="1"/>
</dbReference>
<dbReference type="SUPFAM" id="SSF55129">
    <property type="entry name" value="Ribosomal protein L30p/L7e"/>
    <property type="match status" value="1"/>
</dbReference>
<dbReference type="PROSITE" id="PS00634">
    <property type="entry name" value="RIBOSOMAL_L30"/>
    <property type="match status" value="1"/>
</dbReference>
<name>RL30_ECO8A</name>
<accession>B7M107</accession>
<reference key="1">
    <citation type="journal article" date="2009" name="PLoS Genet.">
        <title>Organised genome dynamics in the Escherichia coli species results in highly diverse adaptive paths.</title>
        <authorList>
            <person name="Touchon M."/>
            <person name="Hoede C."/>
            <person name="Tenaillon O."/>
            <person name="Barbe V."/>
            <person name="Baeriswyl S."/>
            <person name="Bidet P."/>
            <person name="Bingen E."/>
            <person name="Bonacorsi S."/>
            <person name="Bouchier C."/>
            <person name="Bouvet O."/>
            <person name="Calteau A."/>
            <person name="Chiapello H."/>
            <person name="Clermont O."/>
            <person name="Cruveiller S."/>
            <person name="Danchin A."/>
            <person name="Diard M."/>
            <person name="Dossat C."/>
            <person name="Karoui M.E."/>
            <person name="Frapy E."/>
            <person name="Garry L."/>
            <person name="Ghigo J.M."/>
            <person name="Gilles A.M."/>
            <person name="Johnson J."/>
            <person name="Le Bouguenec C."/>
            <person name="Lescat M."/>
            <person name="Mangenot S."/>
            <person name="Martinez-Jehanne V."/>
            <person name="Matic I."/>
            <person name="Nassif X."/>
            <person name="Oztas S."/>
            <person name="Petit M.A."/>
            <person name="Pichon C."/>
            <person name="Rouy Z."/>
            <person name="Ruf C.S."/>
            <person name="Schneider D."/>
            <person name="Tourret J."/>
            <person name="Vacherie B."/>
            <person name="Vallenet D."/>
            <person name="Medigue C."/>
            <person name="Rocha E.P.C."/>
            <person name="Denamur E."/>
        </authorList>
    </citation>
    <scope>NUCLEOTIDE SEQUENCE [LARGE SCALE GENOMIC DNA]</scope>
    <source>
        <strain>IAI1</strain>
    </source>
</reference>
<proteinExistence type="inferred from homology"/>